<evidence type="ECO:0000255" key="1">
    <source>
        <dbReference type="HAMAP-Rule" id="MF_01445"/>
    </source>
</evidence>
<organism>
    <name type="scientific">Idiomarina loihiensis (strain ATCC BAA-735 / DSM 15497 / L2-TR)</name>
    <dbReference type="NCBI Taxonomy" id="283942"/>
    <lineage>
        <taxon>Bacteria</taxon>
        <taxon>Pseudomonadati</taxon>
        <taxon>Pseudomonadota</taxon>
        <taxon>Gammaproteobacteria</taxon>
        <taxon>Alteromonadales</taxon>
        <taxon>Idiomarinaceae</taxon>
        <taxon>Idiomarina</taxon>
    </lineage>
</organism>
<name>TSAD_IDILO</name>
<feature type="chain" id="PRO_0000303387" description="tRNA N6-adenosine threonylcarbamoyltransferase">
    <location>
        <begin position="1"/>
        <end position="344"/>
    </location>
</feature>
<feature type="binding site" evidence="1">
    <location>
        <position position="111"/>
    </location>
    <ligand>
        <name>Fe cation</name>
        <dbReference type="ChEBI" id="CHEBI:24875"/>
    </ligand>
</feature>
<feature type="binding site" evidence="1">
    <location>
        <position position="115"/>
    </location>
    <ligand>
        <name>Fe cation</name>
        <dbReference type="ChEBI" id="CHEBI:24875"/>
    </ligand>
</feature>
<feature type="binding site" evidence="1">
    <location>
        <begin position="134"/>
        <end position="138"/>
    </location>
    <ligand>
        <name>substrate</name>
    </ligand>
</feature>
<feature type="binding site" evidence="1">
    <location>
        <position position="167"/>
    </location>
    <ligand>
        <name>substrate</name>
    </ligand>
</feature>
<feature type="binding site" evidence="1">
    <location>
        <position position="180"/>
    </location>
    <ligand>
        <name>substrate</name>
    </ligand>
</feature>
<feature type="binding site" evidence="1">
    <location>
        <position position="272"/>
    </location>
    <ligand>
        <name>substrate</name>
    </ligand>
</feature>
<feature type="binding site" evidence="1">
    <location>
        <position position="300"/>
    </location>
    <ligand>
        <name>Fe cation</name>
        <dbReference type="ChEBI" id="CHEBI:24875"/>
    </ligand>
</feature>
<proteinExistence type="inferred from homology"/>
<gene>
    <name evidence="1" type="primary">tsaD</name>
    <name type="synonym">gcp</name>
    <name type="ordered locus">IL1970</name>
</gene>
<sequence>MRVLGIETSCDETGVAVYDTEKGLLAHQLYSQVKLHADYGGVVPELASRDHVRKTLPLIKAALKEAGISHQQLDGIAYTMGPGLVGALLVGACIGRSLAFGWNLPAVGVHHMEGHLLAPMLEENQPEFPFVALLVSGGHTQLVQVKGIGDYHLLGESVDDAAGEAFDKTAKLMGLDYPGGPRLAALAEQGNSDRFTFPRPMTDRPGLNFSFSGLKTSAANTLAANDSDEQTLADIARAFEDAVVDTLVIKCRRALKETGYKRLVVAGGVSANKHLRAKLEALLEKQKGQIFYPRTEFCTDNGAMIALAGALRLEAGEREPLAVKTHPRWPMTDLKPMVNISDAV</sequence>
<accession>Q5QY46</accession>
<protein>
    <recommendedName>
        <fullName evidence="1">tRNA N6-adenosine threonylcarbamoyltransferase</fullName>
        <ecNumber evidence="1">2.3.1.234</ecNumber>
    </recommendedName>
    <alternativeName>
        <fullName evidence="1">N6-L-threonylcarbamoyladenine synthase</fullName>
        <shortName evidence="1">t(6)A synthase</shortName>
    </alternativeName>
    <alternativeName>
        <fullName evidence="1">t(6)A37 threonylcarbamoyladenosine biosynthesis protein TsaD</fullName>
    </alternativeName>
    <alternativeName>
        <fullName evidence="1">tRNA threonylcarbamoyladenosine biosynthesis protein TsaD</fullName>
    </alternativeName>
</protein>
<reference key="1">
    <citation type="journal article" date="2004" name="Proc. Natl. Acad. Sci. U.S.A.">
        <title>Genome sequence of the deep-sea gamma-proteobacterium Idiomarina loihiensis reveals amino acid fermentation as a source of carbon and energy.</title>
        <authorList>
            <person name="Hou S."/>
            <person name="Saw J.H."/>
            <person name="Lee K.S."/>
            <person name="Freitas T.A."/>
            <person name="Belisle C."/>
            <person name="Kawarabayasi Y."/>
            <person name="Donachie S.P."/>
            <person name="Pikina A."/>
            <person name="Galperin M.Y."/>
            <person name="Koonin E.V."/>
            <person name="Makarova K.S."/>
            <person name="Omelchenko M.V."/>
            <person name="Sorokin A."/>
            <person name="Wolf Y.I."/>
            <person name="Li Q.X."/>
            <person name="Keum Y.S."/>
            <person name="Campbell S."/>
            <person name="Denery J."/>
            <person name="Aizawa S."/>
            <person name="Shibata S."/>
            <person name="Malahoff A."/>
            <person name="Alam M."/>
        </authorList>
    </citation>
    <scope>NUCLEOTIDE SEQUENCE [LARGE SCALE GENOMIC DNA]</scope>
    <source>
        <strain>ATCC BAA-735 / DSM 15497 / L2-TR</strain>
    </source>
</reference>
<dbReference type="EC" id="2.3.1.234" evidence="1"/>
<dbReference type="EMBL" id="AE017340">
    <property type="protein sequence ID" value="AAV82802.1"/>
    <property type="molecule type" value="Genomic_DNA"/>
</dbReference>
<dbReference type="RefSeq" id="WP_011235198.1">
    <property type="nucleotide sequence ID" value="NC_006512.1"/>
</dbReference>
<dbReference type="SMR" id="Q5QY46"/>
<dbReference type="STRING" id="283942.IL1970"/>
<dbReference type="GeneID" id="41337160"/>
<dbReference type="KEGG" id="ilo:IL1970"/>
<dbReference type="eggNOG" id="COG0533">
    <property type="taxonomic scope" value="Bacteria"/>
</dbReference>
<dbReference type="HOGENOM" id="CLU_023208_0_0_6"/>
<dbReference type="OrthoDB" id="9806197at2"/>
<dbReference type="Proteomes" id="UP000001171">
    <property type="component" value="Chromosome"/>
</dbReference>
<dbReference type="GO" id="GO:0005737">
    <property type="term" value="C:cytoplasm"/>
    <property type="evidence" value="ECO:0007669"/>
    <property type="project" value="UniProtKB-SubCell"/>
</dbReference>
<dbReference type="GO" id="GO:0005506">
    <property type="term" value="F:iron ion binding"/>
    <property type="evidence" value="ECO:0007669"/>
    <property type="project" value="UniProtKB-UniRule"/>
</dbReference>
<dbReference type="GO" id="GO:0061711">
    <property type="term" value="F:N(6)-L-threonylcarbamoyladenine synthase activity"/>
    <property type="evidence" value="ECO:0007669"/>
    <property type="project" value="UniProtKB-EC"/>
</dbReference>
<dbReference type="GO" id="GO:0002949">
    <property type="term" value="P:tRNA threonylcarbamoyladenosine modification"/>
    <property type="evidence" value="ECO:0007669"/>
    <property type="project" value="UniProtKB-UniRule"/>
</dbReference>
<dbReference type="CDD" id="cd24133">
    <property type="entry name" value="ASKHA_NBD_TsaD_bac"/>
    <property type="match status" value="1"/>
</dbReference>
<dbReference type="FunFam" id="3.30.420.40:FF:000012">
    <property type="entry name" value="tRNA N6-adenosine threonylcarbamoyltransferase"/>
    <property type="match status" value="1"/>
</dbReference>
<dbReference type="FunFam" id="3.30.420.40:FF:000031">
    <property type="entry name" value="tRNA N6-adenosine threonylcarbamoyltransferase"/>
    <property type="match status" value="1"/>
</dbReference>
<dbReference type="Gene3D" id="3.30.420.40">
    <property type="match status" value="2"/>
</dbReference>
<dbReference type="HAMAP" id="MF_01445">
    <property type="entry name" value="TsaD"/>
    <property type="match status" value="1"/>
</dbReference>
<dbReference type="InterPro" id="IPR043129">
    <property type="entry name" value="ATPase_NBD"/>
</dbReference>
<dbReference type="InterPro" id="IPR000905">
    <property type="entry name" value="Gcp-like_dom"/>
</dbReference>
<dbReference type="InterPro" id="IPR017861">
    <property type="entry name" value="KAE1/TsaD"/>
</dbReference>
<dbReference type="InterPro" id="IPR017860">
    <property type="entry name" value="Peptidase_M22_CS"/>
</dbReference>
<dbReference type="InterPro" id="IPR022450">
    <property type="entry name" value="TsaD"/>
</dbReference>
<dbReference type="NCBIfam" id="TIGR00329">
    <property type="entry name" value="gcp_kae1"/>
    <property type="match status" value="1"/>
</dbReference>
<dbReference type="NCBIfam" id="TIGR03723">
    <property type="entry name" value="T6A_TsaD_YgjD"/>
    <property type="match status" value="1"/>
</dbReference>
<dbReference type="PANTHER" id="PTHR11735">
    <property type="entry name" value="TRNA N6-ADENOSINE THREONYLCARBAMOYLTRANSFERASE"/>
    <property type="match status" value="1"/>
</dbReference>
<dbReference type="PANTHER" id="PTHR11735:SF6">
    <property type="entry name" value="TRNA N6-ADENOSINE THREONYLCARBAMOYLTRANSFERASE, MITOCHONDRIAL"/>
    <property type="match status" value="1"/>
</dbReference>
<dbReference type="Pfam" id="PF00814">
    <property type="entry name" value="TsaD"/>
    <property type="match status" value="1"/>
</dbReference>
<dbReference type="PRINTS" id="PR00789">
    <property type="entry name" value="OSIALOPTASE"/>
</dbReference>
<dbReference type="SUPFAM" id="SSF53067">
    <property type="entry name" value="Actin-like ATPase domain"/>
    <property type="match status" value="2"/>
</dbReference>
<dbReference type="PROSITE" id="PS01016">
    <property type="entry name" value="GLYCOPROTEASE"/>
    <property type="match status" value="1"/>
</dbReference>
<keyword id="KW-0012">Acyltransferase</keyword>
<keyword id="KW-0963">Cytoplasm</keyword>
<keyword id="KW-0408">Iron</keyword>
<keyword id="KW-0479">Metal-binding</keyword>
<keyword id="KW-1185">Reference proteome</keyword>
<keyword id="KW-0808">Transferase</keyword>
<keyword id="KW-0819">tRNA processing</keyword>
<comment type="function">
    <text evidence="1">Required for the formation of a threonylcarbamoyl group on adenosine at position 37 (t(6)A37) in tRNAs that read codons beginning with adenine. Is involved in the transfer of the threonylcarbamoyl moiety of threonylcarbamoyl-AMP (TC-AMP) to the N6 group of A37, together with TsaE and TsaB. TsaD likely plays a direct catalytic role in this reaction.</text>
</comment>
<comment type="catalytic activity">
    <reaction evidence="1">
        <text>L-threonylcarbamoyladenylate + adenosine(37) in tRNA = N(6)-L-threonylcarbamoyladenosine(37) in tRNA + AMP + H(+)</text>
        <dbReference type="Rhea" id="RHEA:37059"/>
        <dbReference type="Rhea" id="RHEA-COMP:10162"/>
        <dbReference type="Rhea" id="RHEA-COMP:10163"/>
        <dbReference type="ChEBI" id="CHEBI:15378"/>
        <dbReference type="ChEBI" id="CHEBI:73682"/>
        <dbReference type="ChEBI" id="CHEBI:74411"/>
        <dbReference type="ChEBI" id="CHEBI:74418"/>
        <dbReference type="ChEBI" id="CHEBI:456215"/>
        <dbReference type="EC" id="2.3.1.234"/>
    </reaction>
</comment>
<comment type="cofactor">
    <cofactor evidence="1">
        <name>Fe(2+)</name>
        <dbReference type="ChEBI" id="CHEBI:29033"/>
    </cofactor>
    <text evidence="1">Binds 1 Fe(2+) ion per subunit.</text>
</comment>
<comment type="subcellular location">
    <subcellularLocation>
        <location evidence="1">Cytoplasm</location>
    </subcellularLocation>
</comment>
<comment type="similarity">
    <text evidence="1">Belongs to the KAE1 / TsaD family.</text>
</comment>